<accession>B8D9U3</accession>
<keyword id="KW-0687">Ribonucleoprotein</keyword>
<keyword id="KW-0689">Ribosomal protein</keyword>
<keyword id="KW-0694">RNA-binding</keyword>
<keyword id="KW-0699">rRNA-binding</keyword>
<evidence type="ECO:0000255" key="1">
    <source>
        <dbReference type="HAMAP-Rule" id="MF_00531"/>
    </source>
</evidence>
<evidence type="ECO:0000305" key="2"/>
<proteinExistence type="inferred from homology"/>
<organism>
    <name type="scientific">Buchnera aphidicola subsp. Acyrthosiphon pisum (strain 5A)</name>
    <dbReference type="NCBI Taxonomy" id="563178"/>
    <lineage>
        <taxon>Bacteria</taxon>
        <taxon>Pseudomonadati</taxon>
        <taxon>Pseudomonadota</taxon>
        <taxon>Gammaproteobacteria</taxon>
        <taxon>Enterobacterales</taxon>
        <taxon>Erwiniaceae</taxon>
        <taxon>Buchnera</taxon>
    </lineage>
</organism>
<gene>
    <name evidence="1" type="primary">rpsS</name>
    <name type="ordered locus">BUAP5A_513</name>
</gene>
<name>RS19_BUCA5</name>
<comment type="function">
    <text evidence="1">Protein S19 forms a complex with S13 that binds strongly to the 16S ribosomal RNA.</text>
</comment>
<comment type="similarity">
    <text evidence="1">Belongs to the universal ribosomal protein uS19 family.</text>
</comment>
<protein>
    <recommendedName>
        <fullName evidence="1">Small ribosomal subunit protein uS19</fullName>
    </recommendedName>
    <alternativeName>
        <fullName evidence="2">30S ribosomal protein S19</fullName>
    </alternativeName>
</protein>
<dbReference type="EMBL" id="CP001161">
    <property type="protein sequence ID" value="ACL30864.1"/>
    <property type="molecule type" value="Genomic_DNA"/>
</dbReference>
<dbReference type="RefSeq" id="WP_009874471.1">
    <property type="nucleotide sequence ID" value="NC_011833.1"/>
</dbReference>
<dbReference type="SMR" id="B8D9U3"/>
<dbReference type="KEGG" id="bap:BUAP5A_513"/>
<dbReference type="HOGENOM" id="CLU_144911_0_1_6"/>
<dbReference type="OrthoDB" id="9797833at2"/>
<dbReference type="Proteomes" id="UP000006904">
    <property type="component" value="Chromosome"/>
</dbReference>
<dbReference type="GO" id="GO:0005737">
    <property type="term" value="C:cytoplasm"/>
    <property type="evidence" value="ECO:0007669"/>
    <property type="project" value="UniProtKB-ARBA"/>
</dbReference>
<dbReference type="GO" id="GO:0015935">
    <property type="term" value="C:small ribosomal subunit"/>
    <property type="evidence" value="ECO:0007669"/>
    <property type="project" value="InterPro"/>
</dbReference>
<dbReference type="GO" id="GO:0019843">
    <property type="term" value="F:rRNA binding"/>
    <property type="evidence" value="ECO:0007669"/>
    <property type="project" value="UniProtKB-UniRule"/>
</dbReference>
<dbReference type="GO" id="GO:0003735">
    <property type="term" value="F:structural constituent of ribosome"/>
    <property type="evidence" value="ECO:0007669"/>
    <property type="project" value="InterPro"/>
</dbReference>
<dbReference type="GO" id="GO:0000028">
    <property type="term" value="P:ribosomal small subunit assembly"/>
    <property type="evidence" value="ECO:0007669"/>
    <property type="project" value="TreeGrafter"/>
</dbReference>
<dbReference type="GO" id="GO:0006412">
    <property type="term" value="P:translation"/>
    <property type="evidence" value="ECO:0007669"/>
    <property type="project" value="UniProtKB-UniRule"/>
</dbReference>
<dbReference type="FunFam" id="3.30.860.10:FF:000001">
    <property type="entry name" value="30S ribosomal protein S19"/>
    <property type="match status" value="1"/>
</dbReference>
<dbReference type="Gene3D" id="3.30.860.10">
    <property type="entry name" value="30s Ribosomal Protein S19, Chain A"/>
    <property type="match status" value="1"/>
</dbReference>
<dbReference type="HAMAP" id="MF_00531">
    <property type="entry name" value="Ribosomal_uS19"/>
    <property type="match status" value="1"/>
</dbReference>
<dbReference type="InterPro" id="IPR002222">
    <property type="entry name" value="Ribosomal_uS19"/>
</dbReference>
<dbReference type="InterPro" id="IPR005732">
    <property type="entry name" value="Ribosomal_uS19_bac-type"/>
</dbReference>
<dbReference type="InterPro" id="IPR020934">
    <property type="entry name" value="Ribosomal_uS19_CS"/>
</dbReference>
<dbReference type="InterPro" id="IPR023575">
    <property type="entry name" value="Ribosomal_uS19_SF"/>
</dbReference>
<dbReference type="NCBIfam" id="TIGR01050">
    <property type="entry name" value="rpsS_bact"/>
    <property type="match status" value="1"/>
</dbReference>
<dbReference type="PANTHER" id="PTHR11880">
    <property type="entry name" value="RIBOSOMAL PROTEIN S19P FAMILY MEMBER"/>
    <property type="match status" value="1"/>
</dbReference>
<dbReference type="PANTHER" id="PTHR11880:SF8">
    <property type="entry name" value="SMALL RIBOSOMAL SUBUNIT PROTEIN US19M"/>
    <property type="match status" value="1"/>
</dbReference>
<dbReference type="Pfam" id="PF00203">
    <property type="entry name" value="Ribosomal_S19"/>
    <property type="match status" value="1"/>
</dbReference>
<dbReference type="PIRSF" id="PIRSF002144">
    <property type="entry name" value="Ribosomal_S19"/>
    <property type="match status" value="1"/>
</dbReference>
<dbReference type="PRINTS" id="PR00975">
    <property type="entry name" value="RIBOSOMALS19"/>
</dbReference>
<dbReference type="SUPFAM" id="SSF54570">
    <property type="entry name" value="Ribosomal protein S19"/>
    <property type="match status" value="1"/>
</dbReference>
<dbReference type="PROSITE" id="PS00323">
    <property type="entry name" value="RIBOSOMAL_S19"/>
    <property type="match status" value="1"/>
</dbReference>
<reference key="1">
    <citation type="journal article" date="2009" name="Science">
        <title>The dynamics and time scale of ongoing genomic erosion in symbiotic bacteria.</title>
        <authorList>
            <person name="Moran N.A."/>
            <person name="McLaughlin H.J."/>
            <person name="Sorek R."/>
        </authorList>
    </citation>
    <scope>NUCLEOTIDE SEQUENCE [LARGE SCALE GENOMIC DNA]</scope>
    <source>
        <strain>5A</strain>
    </source>
</reference>
<sequence>MPRSLKKGPFIDISLLKKVEKSVKINDKKPIKTWSRRSTIFPNMVGLTISIHNGRSHIPVFVTEEMVGHKLGEFSLTRTYRGHTADKKVKKR</sequence>
<feature type="chain" id="PRO_1000146374" description="Small ribosomal subunit protein uS19">
    <location>
        <begin position="1"/>
        <end position="92"/>
    </location>
</feature>